<keyword id="KW-0687">Ribonucleoprotein</keyword>
<keyword id="KW-0689">Ribosomal protein</keyword>
<keyword id="KW-0694">RNA-binding</keyword>
<keyword id="KW-0699">rRNA-binding</keyword>
<comment type="function">
    <text evidence="1">Located on the platform of the 30S subunit, it bridges several disparate RNA helices of the 16S rRNA. Forms part of the Shine-Dalgarno cleft in the 70S ribosome.</text>
</comment>
<comment type="subunit">
    <text evidence="1">Part of the 30S ribosomal subunit. Interacts with proteins S7 and S18. Binds to IF-3.</text>
</comment>
<comment type="similarity">
    <text evidence="1">Belongs to the universal ribosomal protein uS11 family.</text>
</comment>
<proteinExistence type="inferred from homology"/>
<feature type="chain" id="PRO_1000051863" description="Small ribosomal subunit protein uS11">
    <location>
        <begin position="1"/>
        <end position="129"/>
    </location>
</feature>
<gene>
    <name evidence="1" type="primary">rpsK</name>
    <name type="ordered locus">VIBHAR_00752</name>
</gene>
<dbReference type="EMBL" id="CP000789">
    <property type="protein sequence ID" value="ABU69753.1"/>
    <property type="molecule type" value="Genomic_DNA"/>
</dbReference>
<dbReference type="RefSeq" id="WP_001118870.1">
    <property type="nucleotide sequence ID" value="NC_022269.1"/>
</dbReference>
<dbReference type="SMR" id="A7N0H6"/>
<dbReference type="GeneID" id="97171204"/>
<dbReference type="KEGG" id="vha:VIBHAR_00752"/>
<dbReference type="PATRIC" id="fig|338187.25.peg.1862"/>
<dbReference type="Proteomes" id="UP000008152">
    <property type="component" value="Chromosome I"/>
</dbReference>
<dbReference type="GO" id="GO:1990904">
    <property type="term" value="C:ribonucleoprotein complex"/>
    <property type="evidence" value="ECO:0007669"/>
    <property type="project" value="UniProtKB-KW"/>
</dbReference>
<dbReference type="GO" id="GO:0005840">
    <property type="term" value="C:ribosome"/>
    <property type="evidence" value="ECO:0007669"/>
    <property type="project" value="UniProtKB-KW"/>
</dbReference>
<dbReference type="GO" id="GO:0019843">
    <property type="term" value="F:rRNA binding"/>
    <property type="evidence" value="ECO:0007669"/>
    <property type="project" value="UniProtKB-UniRule"/>
</dbReference>
<dbReference type="GO" id="GO:0003735">
    <property type="term" value="F:structural constituent of ribosome"/>
    <property type="evidence" value="ECO:0007669"/>
    <property type="project" value="InterPro"/>
</dbReference>
<dbReference type="GO" id="GO:0006412">
    <property type="term" value="P:translation"/>
    <property type="evidence" value="ECO:0007669"/>
    <property type="project" value="UniProtKB-UniRule"/>
</dbReference>
<dbReference type="FunFam" id="3.30.420.80:FF:000001">
    <property type="entry name" value="30S ribosomal protein S11"/>
    <property type="match status" value="1"/>
</dbReference>
<dbReference type="Gene3D" id="3.30.420.80">
    <property type="entry name" value="Ribosomal protein S11"/>
    <property type="match status" value="1"/>
</dbReference>
<dbReference type="HAMAP" id="MF_01310">
    <property type="entry name" value="Ribosomal_uS11"/>
    <property type="match status" value="1"/>
</dbReference>
<dbReference type="InterPro" id="IPR001971">
    <property type="entry name" value="Ribosomal_uS11"/>
</dbReference>
<dbReference type="InterPro" id="IPR019981">
    <property type="entry name" value="Ribosomal_uS11_bac-type"/>
</dbReference>
<dbReference type="InterPro" id="IPR018102">
    <property type="entry name" value="Ribosomal_uS11_CS"/>
</dbReference>
<dbReference type="InterPro" id="IPR036967">
    <property type="entry name" value="Ribosomal_uS11_sf"/>
</dbReference>
<dbReference type="NCBIfam" id="NF003698">
    <property type="entry name" value="PRK05309.1"/>
    <property type="match status" value="1"/>
</dbReference>
<dbReference type="NCBIfam" id="TIGR03632">
    <property type="entry name" value="uS11_bact"/>
    <property type="match status" value="1"/>
</dbReference>
<dbReference type="PANTHER" id="PTHR11759">
    <property type="entry name" value="40S RIBOSOMAL PROTEIN S14/30S RIBOSOMAL PROTEIN S11"/>
    <property type="match status" value="1"/>
</dbReference>
<dbReference type="Pfam" id="PF00411">
    <property type="entry name" value="Ribosomal_S11"/>
    <property type="match status" value="1"/>
</dbReference>
<dbReference type="PIRSF" id="PIRSF002131">
    <property type="entry name" value="Ribosomal_S11"/>
    <property type="match status" value="1"/>
</dbReference>
<dbReference type="SUPFAM" id="SSF53137">
    <property type="entry name" value="Translational machinery components"/>
    <property type="match status" value="1"/>
</dbReference>
<dbReference type="PROSITE" id="PS00054">
    <property type="entry name" value="RIBOSOMAL_S11"/>
    <property type="match status" value="1"/>
</dbReference>
<evidence type="ECO:0000255" key="1">
    <source>
        <dbReference type="HAMAP-Rule" id="MF_01310"/>
    </source>
</evidence>
<evidence type="ECO:0000305" key="2"/>
<accession>A7N0H6</accession>
<reference key="1">
    <citation type="submission" date="2007-08" db="EMBL/GenBank/DDBJ databases">
        <authorList>
            <consortium name="The Vibrio harveyi Genome Sequencing Project"/>
            <person name="Bassler B."/>
            <person name="Clifton S.W."/>
            <person name="Fulton L."/>
            <person name="Delehaunty K."/>
            <person name="Fronick C."/>
            <person name="Harrison M."/>
            <person name="Markivic C."/>
            <person name="Fulton R."/>
            <person name="Tin-Wollam A.-M."/>
            <person name="Shah N."/>
            <person name="Pepin K."/>
            <person name="Nash W."/>
            <person name="Thiruvilangam P."/>
            <person name="Bhonagiri V."/>
            <person name="Waters C."/>
            <person name="Tu K.C."/>
            <person name="Irgon J."/>
            <person name="Wilson R.K."/>
        </authorList>
    </citation>
    <scope>NUCLEOTIDE SEQUENCE [LARGE SCALE GENOMIC DNA]</scope>
    <source>
        <strain>ATCC BAA-1116 / BB120</strain>
    </source>
</reference>
<protein>
    <recommendedName>
        <fullName evidence="1">Small ribosomal subunit protein uS11</fullName>
    </recommendedName>
    <alternativeName>
        <fullName evidence="2">30S ribosomal protein S11</fullName>
    </alternativeName>
</protein>
<name>RS11_VIBC1</name>
<organism>
    <name type="scientific">Vibrio campbellii (strain ATCC BAA-1116)</name>
    <dbReference type="NCBI Taxonomy" id="2902295"/>
    <lineage>
        <taxon>Bacteria</taxon>
        <taxon>Pseudomonadati</taxon>
        <taxon>Pseudomonadota</taxon>
        <taxon>Gammaproteobacteria</taxon>
        <taxon>Vibrionales</taxon>
        <taxon>Vibrionaceae</taxon>
        <taxon>Vibrio</taxon>
    </lineage>
</organism>
<sequence>MAKQPTRARKRVRKQVADGVAHIHASFNNTIVTITDRQGNALAWATAGGSGFRGSRKSTPFAAQVAAERCAEMAKEYGLKNLEVMVKGPGPGRESTVRALNAAGFRITNIVDATPIPHNGCRPPKKRRV</sequence>